<gene>
    <name evidence="2" type="primary">tal</name>
    <name type="ordered locus">BTH_I0962</name>
</gene>
<name>TAL_BURTA</name>
<evidence type="ECO:0000250" key="1"/>
<evidence type="ECO:0000255" key="2">
    <source>
        <dbReference type="HAMAP-Rule" id="MF_00492"/>
    </source>
</evidence>
<organism>
    <name type="scientific">Burkholderia thailandensis (strain ATCC 700388 / DSM 13276 / CCUG 48851 / CIP 106301 / E264)</name>
    <dbReference type="NCBI Taxonomy" id="271848"/>
    <lineage>
        <taxon>Bacteria</taxon>
        <taxon>Pseudomonadati</taxon>
        <taxon>Pseudomonadota</taxon>
        <taxon>Betaproteobacteria</taxon>
        <taxon>Burkholderiales</taxon>
        <taxon>Burkholderiaceae</taxon>
        <taxon>Burkholderia</taxon>
        <taxon>pseudomallei group</taxon>
    </lineage>
</organism>
<keyword id="KW-0963">Cytoplasm</keyword>
<keyword id="KW-0570">Pentose shunt</keyword>
<keyword id="KW-0704">Schiff base</keyword>
<keyword id="KW-0808">Transferase</keyword>
<comment type="function">
    <text evidence="2">Transaldolase is important for the balance of metabolites in the pentose-phosphate pathway.</text>
</comment>
<comment type="catalytic activity">
    <reaction evidence="2">
        <text>D-sedoheptulose 7-phosphate + D-glyceraldehyde 3-phosphate = D-erythrose 4-phosphate + beta-D-fructose 6-phosphate</text>
        <dbReference type="Rhea" id="RHEA:17053"/>
        <dbReference type="ChEBI" id="CHEBI:16897"/>
        <dbReference type="ChEBI" id="CHEBI:57483"/>
        <dbReference type="ChEBI" id="CHEBI:57634"/>
        <dbReference type="ChEBI" id="CHEBI:59776"/>
        <dbReference type="EC" id="2.2.1.2"/>
    </reaction>
</comment>
<comment type="pathway">
    <text evidence="2">Carbohydrate degradation; pentose phosphate pathway; D-glyceraldehyde 3-phosphate and beta-D-fructose 6-phosphate from D-ribose 5-phosphate and D-xylulose 5-phosphate (non-oxidative stage): step 2/3.</text>
</comment>
<comment type="subunit">
    <text evidence="1">Homodimer.</text>
</comment>
<comment type="subcellular location">
    <subcellularLocation>
        <location evidence="2">Cytoplasm</location>
    </subcellularLocation>
</comment>
<comment type="similarity">
    <text evidence="2">Belongs to the transaldolase family. Type 1 subfamily.</text>
</comment>
<proteinExistence type="inferred from homology"/>
<dbReference type="EC" id="2.2.1.2" evidence="2"/>
<dbReference type="EMBL" id="CP000086">
    <property type="protein sequence ID" value="ABC38343.1"/>
    <property type="molecule type" value="Genomic_DNA"/>
</dbReference>
<dbReference type="RefSeq" id="WP_009892360.1">
    <property type="nucleotide sequence ID" value="NZ_CP008785.1"/>
</dbReference>
<dbReference type="SMR" id="Q2SZY3"/>
<dbReference type="GeneID" id="45120715"/>
<dbReference type="KEGG" id="bte:BTH_I0962"/>
<dbReference type="HOGENOM" id="CLU_047470_0_1_4"/>
<dbReference type="UniPathway" id="UPA00115">
    <property type="reaction ID" value="UER00414"/>
</dbReference>
<dbReference type="Proteomes" id="UP000001930">
    <property type="component" value="Chromosome I"/>
</dbReference>
<dbReference type="GO" id="GO:0005737">
    <property type="term" value="C:cytoplasm"/>
    <property type="evidence" value="ECO:0007669"/>
    <property type="project" value="UniProtKB-SubCell"/>
</dbReference>
<dbReference type="GO" id="GO:0004801">
    <property type="term" value="F:transaldolase activity"/>
    <property type="evidence" value="ECO:0000250"/>
    <property type="project" value="UniProtKB"/>
</dbReference>
<dbReference type="GO" id="GO:0005975">
    <property type="term" value="P:carbohydrate metabolic process"/>
    <property type="evidence" value="ECO:0007669"/>
    <property type="project" value="InterPro"/>
</dbReference>
<dbReference type="GO" id="GO:0009052">
    <property type="term" value="P:pentose-phosphate shunt, non-oxidative branch"/>
    <property type="evidence" value="ECO:0007669"/>
    <property type="project" value="TreeGrafter"/>
</dbReference>
<dbReference type="CDD" id="cd00957">
    <property type="entry name" value="Transaldolase_TalAB"/>
    <property type="match status" value="1"/>
</dbReference>
<dbReference type="FunFam" id="3.20.20.70:FF:000002">
    <property type="entry name" value="Transaldolase"/>
    <property type="match status" value="1"/>
</dbReference>
<dbReference type="Gene3D" id="3.20.20.70">
    <property type="entry name" value="Aldolase class I"/>
    <property type="match status" value="1"/>
</dbReference>
<dbReference type="HAMAP" id="MF_00492">
    <property type="entry name" value="Transaldolase_1"/>
    <property type="match status" value="1"/>
</dbReference>
<dbReference type="InterPro" id="IPR013785">
    <property type="entry name" value="Aldolase_TIM"/>
</dbReference>
<dbReference type="InterPro" id="IPR001585">
    <property type="entry name" value="TAL/FSA"/>
</dbReference>
<dbReference type="InterPro" id="IPR004730">
    <property type="entry name" value="Transaldolase_1"/>
</dbReference>
<dbReference type="InterPro" id="IPR018225">
    <property type="entry name" value="Transaldolase_AS"/>
</dbReference>
<dbReference type="NCBIfam" id="TIGR00874">
    <property type="entry name" value="talAB"/>
    <property type="match status" value="1"/>
</dbReference>
<dbReference type="PANTHER" id="PTHR10683">
    <property type="entry name" value="TRANSALDOLASE"/>
    <property type="match status" value="1"/>
</dbReference>
<dbReference type="PANTHER" id="PTHR10683:SF18">
    <property type="entry name" value="TRANSALDOLASE"/>
    <property type="match status" value="1"/>
</dbReference>
<dbReference type="Pfam" id="PF00923">
    <property type="entry name" value="TAL_FSA"/>
    <property type="match status" value="1"/>
</dbReference>
<dbReference type="SUPFAM" id="SSF51569">
    <property type="entry name" value="Aldolase"/>
    <property type="match status" value="1"/>
</dbReference>
<dbReference type="PROSITE" id="PS01054">
    <property type="entry name" value="TRANSALDOLASE_1"/>
    <property type="match status" value="1"/>
</dbReference>
<dbReference type="PROSITE" id="PS00958">
    <property type="entry name" value="TRANSALDOLASE_2"/>
    <property type="match status" value="1"/>
</dbReference>
<protein>
    <recommendedName>
        <fullName evidence="2">Transaldolase</fullName>
        <ecNumber evidence="2">2.2.1.2</ecNumber>
    </recommendedName>
</protein>
<accession>Q2SZY3</accession>
<feature type="chain" id="PRO_1000014494" description="Transaldolase">
    <location>
        <begin position="1"/>
        <end position="317"/>
    </location>
</feature>
<feature type="active site" description="Schiff-base intermediate with substrate" evidence="2">
    <location>
        <position position="126"/>
    </location>
</feature>
<reference key="1">
    <citation type="journal article" date="2005" name="BMC Genomics">
        <title>Bacterial genome adaptation to niches: divergence of the potential virulence genes in three Burkholderia species of different survival strategies.</title>
        <authorList>
            <person name="Kim H.S."/>
            <person name="Schell M.A."/>
            <person name="Yu Y."/>
            <person name="Ulrich R.L."/>
            <person name="Sarria S.H."/>
            <person name="Nierman W.C."/>
            <person name="DeShazer D."/>
        </authorList>
    </citation>
    <scope>NUCLEOTIDE SEQUENCE [LARGE SCALE GENOMIC DNA]</scope>
    <source>
        <strain>ATCC 700388 / DSM 13276 / CCUG 48851 / CIP 106301 / E264</strain>
    </source>
</reference>
<sequence>MTTALDQLKQYTTVVADTGDFQQLAQYKPQDATTNPSLILKAVQKDAYRPILEKTVRDHAGESVGFIIDRLLIAFGTEILKLIPGRVSTEVDARLSFDTQRSIDKGREIIKLYEAAGIGRERVLIKLASTWEGIRAAEVLQREGIRCNMTLLFSLVQAAACAEAGAQLISPFVGRIYDWYKKQKGAEWDEAKDGGANDPGVQSVRRIYTYYKQFGYATEVMGASFRTTSQITELAGCDLLTISPDLLQKLHDSAETVARKLSPDAAKDAQLERVAIDESSFRFQLNDDAMATEKLAEGIRLFSADAVKLEKMIDALR</sequence>